<comment type="catalytic activity">
    <reaction evidence="1">
        <text>CMP + ATP = CDP + ADP</text>
        <dbReference type="Rhea" id="RHEA:11600"/>
        <dbReference type="ChEBI" id="CHEBI:30616"/>
        <dbReference type="ChEBI" id="CHEBI:58069"/>
        <dbReference type="ChEBI" id="CHEBI:60377"/>
        <dbReference type="ChEBI" id="CHEBI:456216"/>
        <dbReference type="EC" id="2.7.4.25"/>
    </reaction>
</comment>
<comment type="catalytic activity">
    <reaction evidence="1">
        <text>dCMP + ATP = dCDP + ADP</text>
        <dbReference type="Rhea" id="RHEA:25094"/>
        <dbReference type="ChEBI" id="CHEBI:30616"/>
        <dbReference type="ChEBI" id="CHEBI:57566"/>
        <dbReference type="ChEBI" id="CHEBI:58593"/>
        <dbReference type="ChEBI" id="CHEBI:456216"/>
        <dbReference type="EC" id="2.7.4.25"/>
    </reaction>
</comment>
<comment type="subcellular location">
    <subcellularLocation>
        <location evidence="1">Cytoplasm</location>
    </subcellularLocation>
</comment>
<comment type="similarity">
    <text evidence="1">Belongs to the cytidylate kinase family. Type 2 subfamily.</text>
</comment>
<keyword id="KW-0067">ATP-binding</keyword>
<keyword id="KW-0963">Cytoplasm</keyword>
<keyword id="KW-0418">Kinase</keyword>
<keyword id="KW-0547">Nucleotide-binding</keyword>
<keyword id="KW-1185">Reference proteome</keyword>
<keyword id="KW-0808">Transferase</keyword>
<proteinExistence type="inferred from homology"/>
<reference key="1">
    <citation type="journal article" date="2009" name="Appl. Environ. Microbiol.">
        <title>Metabolic versatility and indigenous origin of the archaeon Thermococcus sibiricus, isolated from a siberian oil reservoir, as revealed by genome analysis.</title>
        <authorList>
            <person name="Mardanov A.V."/>
            <person name="Ravin N.V."/>
            <person name="Svetlitchnyi V.A."/>
            <person name="Beletsky A.V."/>
            <person name="Miroshnichenko M.L."/>
            <person name="Bonch-Osmolovskaya E.A."/>
            <person name="Skryabin K.G."/>
        </authorList>
    </citation>
    <scope>NUCLEOTIDE SEQUENCE [LARGE SCALE GENOMIC DNA]</scope>
    <source>
        <strain>DSM 12597 / MM 739</strain>
    </source>
</reference>
<evidence type="ECO:0000255" key="1">
    <source>
        <dbReference type="HAMAP-Rule" id="MF_00239"/>
    </source>
</evidence>
<feature type="chain" id="PRO_1000204465" description="Cytidylate kinase">
    <location>
        <begin position="1"/>
        <end position="193"/>
    </location>
</feature>
<feature type="binding site" evidence="1">
    <location>
        <begin position="12"/>
        <end position="20"/>
    </location>
    <ligand>
        <name>ATP</name>
        <dbReference type="ChEBI" id="CHEBI:30616"/>
    </ligand>
</feature>
<dbReference type="EC" id="2.7.4.25" evidence="1"/>
<dbReference type="EMBL" id="CP001463">
    <property type="protein sequence ID" value="ACS89382.1"/>
    <property type="molecule type" value="Genomic_DNA"/>
</dbReference>
<dbReference type="RefSeq" id="WP_015848602.1">
    <property type="nucleotide sequence ID" value="NC_012883.1"/>
</dbReference>
<dbReference type="SMR" id="C6A187"/>
<dbReference type="STRING" id="604354.TSIB_0316"/>
<dbReference type="GeneID" id="8095289"/>
<dbReference type="KEGG" id="tsi:TSIB_0316"/>
<dbReference type="eggNOG" id="arCOG01037">
    <property type="taxonomic scope" value="Archaea"/>
</dbReference>
<dbReference type="HOGENOM" id="CLU_079959_1_0_2"/>
<dbReference type="OrthoDB" id="31096at2157"/>
<dbReference type="Proteomes" id="UP000009079">
    <property type="component" value="Chromosome"/>
</dbReference>
<dbReference type="GO" id="GO:0005737">
    <property type="term" value="C:cytoplasm"/>
    <property type="evidence" value="ECO:0007669"/>
    <property type="project" value="UniProtKB-SubCell"/>
</dbReference>
<dbReference type="GO" id="GO:0005524">
    <property type="term" value="F:ATP binding"/>
    <property type="evidence" value="ECO:0007669"/>
    <property type="project" value="UniProtKB-UniRule"/>
</dbReference>
<dbReference type="GO" id="GO:0036430">
    <property type="term" value="F:CMP kinase activity"/>
    <property type="evidence" value="ECO:0007669"/>
    <property type="project" value="RHEA"/>
</dbReference>
<dbReference type="GO" id="GO:0036431">
    <property type="term" value="F:dCMP kinase activity"/>
    <property type="evidence" value="ECO:0007669"/>
    <property type="project" value="RHEA"/>
</dbReference>
<dbReference type="GO" id="GO:0006220">
    <property type="term" value="P:pyrimidine nucleotide metabolic process"/>
    <property type="evidence" value="ECO:0007669"/>
    <property type="project" value="UniProtKB-UniRule"/>
</dbReference>
<dbReference type="CDD" id="cd02020">
    <property type="entry name" value="CMPK"/>
    <property type="match status" value="1"/>
</dbReference>
<dbReference type="Gene3D" id="3.40.50.300">
    <property type="entry name" value="P-loop containing nucleotide triphosphate hydrolases"/>
    <property type="match status" value="1"/>
</dbReference>
<dbReference type="HAMAP" id="MF_00239">
    <property type="entry name" value="Cytidyl_kinase_type2"/>
    <property type="match status" value="1"/>
</dbReference>
<dbReference type="InterPro" id="IPR011892">
    <property type="entry name" value="Cyt_kin_arch"/>
</dbReference>
<dbReference type="InterPro" id="IPR011994">
    <property type="entry name" value="Cytidylate_kinase_dom"/>
</dbReference>
<dbReference type="InterPro" id="IPR027417">
    <property type="entry name" value="P-loop_NTPase"/>
</dbReference>
<dbReference type="NCBIfam" id="TIGR02173">
    <property type="entry name" value="cyt_kin_arch"/>
    <property type="match status" value="1"/>
</dbReference>
<dbReference type="Pfam" id="PF13189">
    <property type="entry name" value="Cytidylate_kin2"/>
    <property type="match status" value="1"/>
</dbReference>
<dbReference type="SUPFAM" id="SSF52540">
    <property type="entry name" value="P-loop containing nucleoside triphosphate hydrolases"/>
    <property type="match status" value="1"/>
</dbReference>
<accession>C6A187</accession>
<protein>
    <recommendedName>
        <fullName evidence="1">Cytidylate kinase</fullName>
        <shortName evidence="1">CK</shortName>
        <ecNumber evidence="1">2.7.4.25</ecNumber>
    </recommendedName>
    <alternativeName>
        <fullName evidence="1">Cytidine monophosphate kinase</fullName>
        <shortName evidence="1">CMP kinase</shortName>
    </alternativeName>
</protein>
<organism>
    <name type="scientific">Thermococcus sibiricus (strain DSM 12597 / MM 739)</name>
    <dbReference type="NCBI Taxonomy" id="604354"/>
    <lineage>
        <taxon>Archaea</taxon>
        <taxon>Methanobacteriati</taxon>
        <taxon>Methanobacteriota</taxon>
        <taxon>Thermococci</taxon>
        <taxon>Thermococcales</taxon>
        <taxon>Thermococcaceae</taxon>
        <taxon>Thermococcus</taxon>
    </lineage>
</organism>
<name>KCY_THESM</name>
<gene>
    <name evidence="1" type="primary">cmk</name>
    <name type="ordered locus">TSIB_0316</name>
</gene>
<sequence length="193" mass="21895">MSRKCLVITVSGLAGSGTTTLCRNLSRYYGFKHIYAGLIFRQMAKEMGMSLQQFQEYAEMHPEIDREVDRRQIEAAEDCNVVIEGRLAGWMVKEADLKVWLEAPIQVRAQRVARREGISIEEAFMQIAEREMQNRKRYLNLYGIDINDRSIYDLVINTFKWGPDGVFAIVKAAIDHLYPDGDAGSGANPGNKS</sequence>